<protein>
    <recommendedName>
        <fullName>Thrombin-like enzyme okinaxobin-1</fullName>
        <shortName>SVTLE</shortName>
        <ecNumber>3.4.21.-</ecNumber>
    </recommendedName>
    <alternativeName>
        <fullName>Fibrinogen-clotting enzyme</fullName>
    </alternativeName>
    <alternativeName>
        <fullName evidence="6 7">Okinaxobin I</fullName>
    </alternativeName>
    <alternativeName>
        <fullName>Snake venom serine protease</fullName>
        <shortName>SVSP</shortName>
    </alternativeName>
</protein>
<evidence type="ECO:0000250" key="1">
    <source>
        <dbReference type="UniProtKB" id="Q9I8X1"/>
    </source>
</evidence>
<evidence type="ECO:0000255" key="2"/>
<evidence type="ECO:0000255" key="3">
    <source>
        <dbReference type="PROSITE-ProRule" id="PRU00274"/>
    </source>
</evidence>
<evidence type="ECO:0000269" key="4">
    <source>
    </source>
</evidence>
<evidence type="ECO:0000269" key="5">
    <source>
    </source>
</evidence>
<evidence type="ECO:0000303" key="6">
    <source>
    </source>
</evidence>
<evidence type="ECO:0000303" key="7">
    <source>
    </source>
</evidence>
<evidence type="ECO:0000305" key="8"/>
<evidence type="ECO:0000305" key="9">
    <source>
    </source>
</evidence>
<evidence type="ECO:0000305" key="10">
    <source>
    </source>
</evidence>
<evidence type="ECO:0000312" key="11">
    <source>
        <dbReference type="EMBL" id="BAN82120.1"/>
    </source>
</evidence>
<name>VSP1_OVOOK</name>
<organism>
    <name type="scientific">Ovophis okinavensis</name>
    <name type="common">Ryukyu Island pit viper</name>
    <name type="synonym">Trimeresurus okinavensis</name>
    <dbReference type="NCBI Taxonomy" id="8769"/>
    <lineage>
        <taxon>Eukaryota</taxon>
        <taxon>Metazoa</taxon>
        <taxon>Chordata</taxon>
        <taxon>Craniata</taxon>
        <taxon>Vertebrata</taxon>
        <taxon>Euteleostomi</taxon>
        <taxon>Lepidosauria</taxon>
        <taxon>Squamata</taxon>
        <taxon>Bifurcata</taxon>
        <taxon>Unidentata</taxon>
        <taxon>Episquamata</taxon>
        <taxon>Toxicofera</taxon>
        <taxon>Serpentes</taxon>
        <taxon>Colubroidea</taxon>
        <taxon>Viperidae</taxon>
        <taxon>Crotalinae</taxon>
        <taxon>Ovophis</taxon>
    </lineage>
</organism>
<sequence>LIRVLANLLILQLSYAQKSSELVIGGDECNINEHRFLAALYDVWSGDFLCGGTLIHPEWVLTAAHCDRYRLSIKLGMHNKNVQFDDEQSRYPKKKYFFRCR</sequence>
<dbReference type="EC" id="3.4.21.-"/>
<dbReference type="EMBL" id="AB848249">
    <property type="protein sequence ID" value="BAN82120.1"/>
    <property type="molecule type" value="mRNA"/>
</dbReference>
<dbReference type="PIR" id="PX0042">
    <property type="entry name" value="PX0042"/>
</dbReference>
<dbReference type="MEROPS" id="S01.346"/>
<dbReference type="SABIO-RK" id="P20005"/>
<dbReference type="GO" id="GO:0005576">
    <property type="term" value="C:extracellular region"/>
    <property type="evidence" value="ECO:0007669"/>
    <property type="project" value="UniProtKB-SubCell"/>
</dbReference>
<dbReference type="GO" id="GO:0008236">
    <property type="term" value="F:serine-type peptidase activity"/>
    <property type="evidence" value="ECO:0007669"/>
    <property type="project" value="UniProtKB-KW"/>
</dbReference>
<dbReference type="GO" id="GO:0090729">
    <property type="term" value="F:toxin activity"/>
    <property type="evidence" value="ECO:0007669"/>
    <property type="project" value="UniProtKB-KW"/>
</dbReference>
<dbReference type="GO" id="GO:0006508">
    <property type="term" value="P:proteolysis"/>
    <property type="evidence" value="ECO:0007669"/>
    <property type="project" value="UniProtKB-KW"/>
</dbReference>
<dbReference type="Gene3D" id="2.40.10.10">
    <property type="entry name" value="Trypsin-like serine proteases"/>
    <property type="match status" value="2"/>
</dbReference>
<dbReference type="InterPro" id="IPR009003">
    <property type="entry name" value="Peptidase_S1_PA"/>
</dbReference>
<dbReference type="InterPro" id="IPR043504">
    <property type="entry name" value="Peptidase_S1_PA_chymotrypsin"/>
</dbReference>
<dbReference type="InterPro" id="IPR050127">
    <property type="entry name" value="Serine_Proteases_S1"/>
</dbReference>
<dbReference type="InterPro" id="IPR001254">
    <property type="entry name" value="Trypsin_dom"/>
</dbReference>
<dbReference type="InterPro" id="IPR018114">
    <property type="entry name" value="TRYPSIN_HIS"/>
</dbReference>
<dbReference type="PANTHER" id="PTHR24264:SF15">
    <property type="entry name" value="RIKEN CDNA 2210010C04 GENE"/>
    <property type="match status" value="1"/>
</dbReference>
<dbReference type="PANTHER" id="PTHR24264">
    <property type="entry name" value="TRYPSIN-RELATED"/>
    <property type="match status" value="1"/>
</dbReference>
<dbReference type="Pfam" id="PF00089">
    <property type="entry name" value="Trypsin"/>
    <property type="match status" value="1"/>
</dbReference>
<dbReference type="SUPFAM" id="SSF50494">
    <property type="entry name" value="Trypsin-like serine proteases"/>
    <property type="match status" value="1"/>
</dbReference>
<dbReference type="PROSITE" id="PS00134">
    <property type="entry name" value="TRYPSIN_HIS"/>
    <property type="match status" value="1"/>
</dbReference>
<proteinExistence type="evidence at protein level"/>
<accession>P20005</accession>
<accession>T2HQ35</accession>
<feature type="signal peptide" evidence="2">
    <location>
        <begin position="1" status="less than"/>
        <end position="16"/>
    </location>
</feature>
<feature type="propeptide" id="PRO_0000462196" evidence="9 10">
    <location>
        <begin position="17"/>
        <end position="22"/>
    </location>
</feature>
<feature type="chain" id="PRO_0000088742" description="Thrombin-like enzyme okinaxobin-1">
    <location>
        <begin position="23"/>
        <end position="101" status="greater than"/>
    </location>
</feature>
<feature type="domain" description="Peptidase S1" evidence="3">
    <location>
        <begin position="23"/>
        <end position="101" status="greater than"/>
    </location>
</feature>
<feature type="active site" description="Charge relay system" evidence="1">
    <location>
        <position position="65"/>
    </location>
</feature>
<feature type="disulfide bond" evidence="1">
    <location>
        <begin position="29"/>
        <end status="unknown"/>
    </location>
</feature>
<feature type="disulfide bond" evidence="1">
    <location>
        <begin position="50"/>
        <end position="66"/>
    </location>
</feature>
<feature type="disulfide bond" evidence="1">
    <location>
        <begin position="100"/>
        <end status="unknown"/>
    </location>
</feature>
<feature type="non-terminal residue" evidence="8">
    <location>
        <position position="1"/>
    </location>
</feature>
<feature type="non-terminal residue" evidence="8">
    <location>
        <position position="101"/>
    </location>
</feature>
<comment type="function">
    <text evidence="4 5">Thrombin-like snake venom serine protease that releases specifically fibrinopeptide B from fibrinogen (FGB) to form fibrin clots. Shows a preferential cleavage at Arg-|-Gly bonds in fibrinogen beta chains. Cleaves fibrinogen beta chains preferentially to alpha chains.</text>
</comment>
<comment type="activity regulation">
    <text evidence="4">Strongly inactivated by diisopropylfluorophosphate (DFP) and phenylmethanesulfonyl fluoride (PMSF), and to a lesser extent by tosyl-L-lysine chloromethyl ketone (TLCK).</text>
</comment>
<comment type="biophysicochemical properties">
    <kinetics>
        <KM evidence="5">73 uM for tosyl-L-arginine methyl ester (TAME)</KM>
        <KM evidence="5">40 uM for benzoyl-L-arginine p-nitroanilide (BAPA)</KM>
    </kinetics>
</comment>
<comment type="subunit">
    <text evidence="4">Monomer.</text>
</comment>
<comment type="subcellular location">
    <subcellularLocation>
        <location evidence="4 5">Secreted</location>
    </subcellularLocation>
</comment>
<comment type="tissue specificity">
    <text evidence="4 10">Expressed by the venom gland.</text>
</comment>
<comment type="PTM">
    <text evidence="4">Glycosylated.</text>
</comment>
<comment type="similarity">
    <text evidence="8">Belongs to the peptidase S1 family. Snake venom subfamily.</text>
</comment>
<reference evidence="11" key="1">
    <citation type="journal article" date="2013" name="BMC Genomics">
        <title>Quantitative high-throughput profiling of snake venom gland transcriptomes and proteomes (Ovophis okinavensis and Protobothrops flavoviridis).</title>
        <authorList>
            <person name="Aird S.D."/>
            <person name="Watanabe Y."/>
            <person name="Villar-Briones A."/>
            <person name="Roy M.C."/>
            <person name="Terada K."/>
            <person name="Mikheyev A.S."/>
        </authorList>
    </citation>
    <scope>NUCLEOTIDE SEQUENCE [MRNA]</scope>
    <source>
        <tissue>Venom gland</tissue>
    </source>
</reference>
<reference key="2">
    <citation type="journal article" date="1990" name="J. Biochem.">
        <title>Purification and characterization of a coagulant enzyme, okinaxobin I, from the venom of Trimeresurus okinavensis (Himehabu snake) which releases fibrinopeptide B.</title>
        <authorList>
            <person name="Iwasaki A."/>
            <person name="Shieh T.-C."/>
            <person name="Shimohigashi Y."/>
            <person name="Waki M."/>
            <person name="Kihara H."/>
            <person name="Ohno M."/>
        </authorList>
    </citation>
    <scope>PROTEIN SEQUENCE OF 23-42</scope>
    <scope>FUNCTION</scope>
    <scope>ACTIVITY REGULATION</scope>
    <scope>SUBUNIT</scope>
    <scope>SUBCELLULAR LOCATION</scope>
    <scope>TISSUE SPECIFICITY</scope>
    <scope>GLYCOSYLATION</scope>
    <source>
        <tissue>Venom</tissue>
    </source>
</reference>
<reference key="3">
    <citation type="journal article" date="1994" name="Toxicon">
        <title>Purification and characterization of a coagulant enzyme, okinaxobin II, from Trimeresurus okinavensis (himehabu snake) venom which release fibrinopeptides A and B.</title>
        <authorList>
            <person name="Nose T."/>
            <person name="Shimohigashi Y."/>
            <person name="Hattori S."/>
            <person name="Kihara H."/>
            <person name="Ohno M."/>
        </authorList>
    </citation>
    <scope>PROTEIN SEQUENCE OF 23-42</scope>
    <scope>FUNCTION</scope>
    <scope>BIOPHYSICOCHEMICAL PROPERTIES</scope>
    <scope>SUBCELLULAR LOCATION</scope>
    <source>
        <tissue>Venom</tissue>
    </source>
</reference>
<keyword id="KW-1204">Blood coagulation cascade activating toxin</keyword>
<keyword id="KW-0903">Direct protein sequencing</keyword>
<keyword id="KW-1015">Disulfide bond</keyword>
<keyword id="KW-0325">Glycoprotein</keyword>
<keyword id="KW-1199">Hemostasis impairing toxin</keyword>
<keyword id="KW-0378">Hydrolase</keyword>
<keyword id="KW-0645">Protease</keyword>
<keyword id="KW-0964">Secreted</keyword>
<keyword id="KW-0720">Serine protease</keyword>
<keyword id="KW-0732">Signal</keyword>
<keyword id="KW-0800">Toxin</keyword>